<reference key="1">
    <citation type="submission" date="2007-02" db="EMBL/GenBank/DDBJ databases">
        <title>Complete sequence of chromosome of Shewanella baltica OS155.</title>
        <authorList>
            <consortium name="US DOE Joint Genome Institute"/>
            <person name="Copeland A."/>
            <person name="Lucas S."/>
            <person name="Lapidus A."/>
            <person name="Barry K."/>
            <person name="Detter J.C."/>
            <person name="Glavina del Rio T."/>
            <person name="Hammon N."/>
            <person name="Israni S."/>
            <person name="Dalin E."/>
            <person name="Tice H."/>
            <person name="Pitluck S."/>
            <person name="Sims D.R."/>
            <person name="Brettin T."/>
            <person name="Bruce D."/>
            <person name="Han C."/>
            <person name="Tapia R."/>
            <person name="Brainard J."/>
            <person name="Schmutz J."/>
            <person name="Larimer F."/>
            <person name="Land M."/>
            <person name="Hauser L."/>
            <person name="Kyrpides N."/>
            <person name="Mikhailova N."/>
            <person name="Brettar I."/>
            <person name="Klappenbach J."/>
            <person name="Konstantinidis K."/>
            <person name="Rodrigues J."/>
            <person name="Tiedje J."/>
            <person name="Richardson P."/>
        </authorList>
    </citation>
    <scope>NUCLEOTIDE SEQUENCE [LARGE SCALE GENOMIC DNA]</scope>
    <source>
        <strain>OS155 / ATCC BAA-1091</strain>
    </source>
</reference>
<accession>A3D5N8</accession>
<feature type="chain" id="PRO_1000050614" description="Peptidase E">
    <location>
        <begin position="1"/>
        <end position="237"/>
    </location>
</feature>
<feature type="active site" description="Charge relay system" evidence="1">
    <location>
        <position position="122"/>
    </location>
</feature>
<feature type="active site" description="Charge relay system" evidence="1">
    <location>
        <position position="137"/>
    </location>
</feature>
<feature type="active site" description="Charge relay system" evidence="1">
    <location>
        <position position="159"/>
    </location>
</feature>
<sequence>MTINALLLSSSRVGDTPYLAHAIPFIKPLTTNAQKWIFIPYAGVSMSYDTYLASVVTGLSELELDISGIHQHPDPQQAIKDADGILIGGGNTFHLLHQLYRYDLVTLIGEQVALGKPYIGWSAGSNVSGLSIRTTNDMPIIEPPSFNALNLVPFQLNPHYSNYQAPGHNGETRAQRLLEFTKVDPLTPVVGIVEGSALWRQGDKLSLLGDQPAYLFCGEQQEIPIPVGSDLSHLLKA</sequence>
<comment type="function">
    <text evidence="1">Hydrolyzes dipeptides containing N-terminal aspartate residues. May play a role in allowing the cell to use peptide aspartate to spare carbon otherwise required for the synthesis of the aspartate family of amino acids.</text>
</comment>
<comment type="catalytic activity">
    <reaction evidence="1">
        <text>Dipeptidase E catalyzes the hydrolysis of dipeptides Asp-|-Xaa. It does not act on peptides with N-terminal Glu, Asn or Gln, nor does it cleave isoaspartyl peptides.</text>
        <dbReference type="EC" id="3.4.13.21"/>
    </reaction>
</comment>
<comment type="subcellular location">
    <subcellularLocation>
        <location evidence="1">Cytoplasm</location>
    </subcellularLocation>
</comment>
<comment type="similarity">
    <text evidence="1">Belongs to the peptidase S51 family.</text>
</comment>
<name>PEPE_SHEB5</name>
<protein>
    <recommendedName>
        <fullName evidence="1">Peptidase E</fullName>
        <ecNumber evidence="1">3.4.13.21</ecNumber>
    </recommendedName>
    <alternativeName>
        <fullName evidence="1">Alpha-aspartyl dipeptidase</fullName>
    </alternativeName>
    <alternativeName>
        <fullName evidence="1">Asp-specific dipeptidase</fullName>
    </alternativeName>
    <alternativeName>
        <fullName evidence="1">Dipeptidase E</fullName>
    </alternativeName>
</protein>
<keyword id="KW-0963">Cytoplasm</keyword>
<keyword id="KW-0224">Dipeptidase</keyword>
<keyword id="KW-0378">Hydrolase</keyword>
<keyword id="KW-0645">Protease</keyword>
<keyword id="KW-1185">Reference proteome</keyword>
<keyword id="KW-0720">Serine protease</keyword>
<proteinExistence type="inferred from homology"/>
<dbReference type="EC" id="3.4.13.21" evidence="1"/>
<dbReference type="EMBL" id="CP000563">
    <property type="protein sequence ID" value="ABN62051.1"/>
    <property type="molecule type" value="Genomic_DNA"/>
</dbReference>
<dbReference type="RefSeq" id="WP_011847050.1">
    <property type="nucleotide sequence ID" value="NC_009052.1"/>
</dbReference>
<dbReference type="SMR" id="A3D5N8"/>
<dbReference type="STRING" id="325240.Sbal_2558"/>
<dbReference type="MEROPS" id="S51.001"/>
<dbReference type="KEGG" id="sbl:Sbal_2558"/>
<dbReference type="HOGENOM" id="CLU_071689_0_0_6"/>
<dbReference type="OrthoDB" id="3373764at2"/>
<dbReference type="Proteomes" id="UP000001557">
    <property type="component" value="Chromosome"/>
</dbReference>
<dbReference type="GO" id="GO:0005737">
    <property type="term" value="C:cytoplasm"/>
    <property type="evidence" value="ECO:0007669"/>
    <property type="project" value="UniProtKB-SubCell"/>
</dbReference>
<dbReference type="GO" id="GO:0016805">
    <property type="term" value="F:dipeptidase activity"/>
    <property type="evidence" value="ECO:0007669"/>
    <property type="project" value="UniProtKB-UniRule"/>
</dbReference>
<dbReference type="GO" id="GO:0008236">
    <property type="term" value="F:serine-type peptidase activity"/>
    <property type="evidence" value="ECO:0007669"/>
    <property type="project" value="UniProtKB-KW"/>
</dbReference>
<dbReference type="GO" id="GO:0006508">
    <property type="term" value="P:proteolysis"/>
    <property type="evidence" value="ECO:0007669"/>
    <property type="project" value="UniProtKB-UniRule"/>
</dbReference>
<dbReference type="CDD" id="cd03146">
    <property type="entry name" value="GAT1_Peptidase_E"/>
    <property type="match status" value="1"/>
</dbReference>
<dbReference type="FunFam" id="3.40.50.880:FF:000007">
    <property type="entry name" value="Peptidase E"/>
    <property type="match status" value="1"/>
</dbReference>
<dbReference type="Gene3D" id="3.40.50.880">
    <property type="match status" value="1"/>
</dbReference>
<dbReference type="HAMAP" id="MF_00510">
    <property type="entry name" value="Peptidase_E"/>
    <property type="match status" value="1"/>
</dbReference>
<dbReference type="InterPro" id="IPR029062">
    <property type="entry name" value="Class_I_gatase-like"/>
</dbReference>
<dbReference type="InterPro" id="IPR005320">
    <property type="entry name" value="Peptidase_S51"/>
</dbReference>
<dbReference type="InterPro" id="IPR023172">
    <property type="entry name" value="Peptidase_S51_dipeptidase-E"/>
</dbReference>
<dbReference type="NCBIfam" id="NF003642">
    <property type="entry name" value="PRK05282.1"/>
    <property type="match status" value="1"/>
</dbReference>
<dbReference type="PANTHER" id="PTHR20842:SF0">
    <property type="entry name" value="ALPHA-ASPARTYL DIPEPTIDASE"/>
    <property type="match status" value="1"/>
</dbReference>
<dbReference type="PANTHER" id="PTHR20842">
    <property type="entry name" value="PROTEASE S51 ALPHA-ASPARTYL DIPEPTIDASE"/>
    <property type="match status" value="1"/>
</dbReference>
<dbReference type="Pfam" id="PF03575">
    <property type="entry name" value="Peptidase_S51"/>
    <property type="match status" value="1"/>
</dbReference>
<dbReference type="SUPFAM" id="SSF52317">
    <property type="entry name" value="Class I glutamine amidotransferase-like"/>
    <property type="match status" value="1"/>
</dbReference>
<gene>
    <name evidence="1" type="primary">pepE</name>
    <name type="ordered locus">Sbal_2558</name>
</gene>
<evidence type="ECO:0000255" key="1">
    <source>
        <dbReference type="HAMAP-Rule" id="MF_00510"/>
    </source>
</evidence>
<organism>
    <name type="scientific">Shewanella baltica (strain OS155 / ATCC BAA-1091)</name>
    <dbReference type="NCBI Taxonomy" id="325240"/>
    <lineage>
        <taxon>Bacteria</taxon>
        <taxon>Pseudomonadati</taxon>
        <taxon>Pseudomonadota</taxon>
        <taxon>Gammaproteobacteria</taxon>
        <taxon>Alteromonadales</taxon>
        <taxon>Shewanellaceae</taxon>
        <taxon>Shewanella</taxon>
    </lineage>
</organism>